<reference key="1">
    <citation type="journal article" date="2004" name="Nucleic Acids Res.">
        <title>The genome sequence of Bacillus cereus ATCC 10987 reveals metabolic adaptations and a large plasmid related to Bacillus anthracis pXO1.</title>
        <authorList>
            <person name="Rasko D.A."/>
            <person name="Ravel J."/>
            <person name="Oekstad O.A."/>
            <person name="Helgason E."/>
            <person name="Cer R.Z."/>
            <person name="Jiang L."/>
            <person name="Shores K.A."/>
            <person name="Fouts D.E."/>
            <person name="Tourasse N.J."/>
            <person name="Angiuoli S.V."/>
            <person name="Kolonay J.F."/>
            <person name="Nelson W.C."/>
            <person name="Kolstoe A.-B."/>
            <person name="Fraser C.M."/>
            <person name="Read T.D."/>
        </authorList>
    </citation>
    <scope>NUCLEOTIDE SEQUENCE [LARGE SCALE GENOMIC DNA]</scope>
    <source>
        <strain>ATCC 10987 / NRS 248</strain>
    </source>
</reference>
<dbReference type="EC" id="2.8.4.3" evidence="1"/>
<dbReference type="EMBL" id="AE017194">
    <property type="protein sequence ID" value="AAS42711.1"/>
    <property type="molecule type" value="Genomic_DNA"/>
</dbReference>
<dbReference type="SMR" id="Q732V4"/>
<dbReference type="KEGG" id="bca:BCE_3806"/>
<dbReference type="HOGENOM" id="CLU_018697_2_0_9"/>
<dbReference type="Proteomes" id="UP000002527">
    <property type="component" value="Chromosome"/>
</dbReference>
<dbReference type="GO" id="GO:0005829">
    <property type="term" value="C:cytosol"/>
    <property type="evidence" value="ECO:0007669"/>
    <property type="project" value="TreeGrafter"/>
</dbReference>
<dbReference type="GO" id="GO:0051539">
    <property type="term" value="F:4 iron, 4 sulfur cluster binding"/>
    <property type="evidence" value="ECO:0007669"/>
    <property type="project" value="UniProtKB-UniRule"/>
</dbReference>
<dbReference type="GO" id="GO:0046872">
    <property type="term" value="F:metal ion binding"/>
    <property type="evidence" value="ECO:0007669"/>
    <property type="project" value="UniProtKB-KW"/>
</dbReference>
<dbReference type="GO" id="GO:0035597">
    <property type="term" value="F:N6-isopentenyladenosine methylthiotransferase activity"/>
    <property type="evidence" value="ECO:0007669"/>
    <property type="project" value="TreeGrafter"/>
</dbReference>
<dbReference type="CDD" id="cd01335">
    <property type="entry name" value="Radical_SAM"/>
    <property type="match status" value="1"/>
</dbReference>
<dbReference type="FunFam" id="3.40.50.12160:FF:000006">
    <property type="entry name" value="tRNA-2-methylthio-N(6)-dimethylallyladenosine synthase"/>
    <property type="match status" value="1"/>
</dbReference>
<dbReference type="FunFam" id="3.80.30.20:FF:000001">
    <property type="entry name" value="tRNA-2-methylthio-N(6)-dimethylallyladenosine synthase 2"/>
    <property type="match status" value="1"/>
</dbReference>
<dbReference type="Gene3D" id="3.40.50.12160">
    <property type="entry name" value="Methylthiotransferase, N-terminal domain"/>
    <property type="match status" value="1"/>
</dbReference>
<dbReference type="Gene3D" id="3.80.30.20">
    <property type="entry name" value="tm_1862 like domain"/>
    <property type="match status" value="1"/>
</dbReference>
<dbReference type="HAMAP" id="MF_01864">
    <property type="entry name" value="tRNA_metthiotr_MiaB"/>
    <property type="match status" value="1"/>
</dbReference>
<dbReference type="InterPro" id="IPR006638">
    <property type="entry name" value="Elp3/MiaA/NifB-like_rSAM"/>
</dbReference>
<dbReference type="InterPro" id="IPR005839">
    <property type="entry name" value="Methylthiotransferase"/>
</dbReference>
<dbReference type="InterPro" id="IPR020612">
    <property type="entry name" value="Methylthiotransferase_CS"/>
</dbReference>
<dbReference type="InterPro" id="IPR013848">
    <property type="entry name" value="Methylthiotransferase_N"/>
</dbReference>
<dbReference type="InterPro" id="IPR038135">
    <property type="entry name" value="Methylthiotransferase_N_sf"/>
</dbReference>
<dbReference type="InterPro" id="IPR006463">
    <property type="entry name" value="MiaB_methiolase"/>
</dbReference>
<dbReference type="InterPro" id="IPR007197">
    <property type="entry name" value="rSAM"/>
</dbReference>
<dbReference type="InterPro" id="IPR023404">
    <property type="entry name" value="rSAM_horseshoe"/>
</dbReference>
<dbReference type="InterPro" id="IPR002792">
    <property type="entry name" value="TRAM_dom"/>
</dbReference>
<dbReference type="NCBIfam" id="TIGR01574">
    <property type="entry name" value="miaB-methiolase"/>
    <property type="match status" value="1"/>
</dbReference>
<dbReference type="NCBIfam" id="TIGR00089">
    <property type="entry name" value="MiaB/RimO family radical SAM methylthiotransferase"/>
    <property type="match status" value="1"/>
</dbReference>
<dbReference type="PANTHER" id="PTHR43020">
    <property type="entry name" value="CDK5 REGULATORY SUBUNIT-ASSOCIATED PROTEIN 1"/>
    <property type="match status" value="1"/>
</dbReference>
<dbReference type="PANTHER" id="PTHR43020:SF2">
    <property type="entry name" value="MITOCHONDRIAL TRNA METHYLTHIOTRANSFERASE CDK5RAP1"/>
    <property type="match status" value="1"/>
</dbReference>
<dbReference type="Pfam" id="PF04055">
    <property type="entry name" value="Radical_SAM"/>
    <property type="match status" value="1"/>
</dbReference>
<dbReference type="Pfam" id="PF01938">
    <property type="entry name" value="TRAM"/>
    <property type="match status" value="1"/>
</dbReference>
<dbReference type="Pfam" id="PF00919">
    <property type="entry name" value="UPF0004"/>
    <property type="match status" value="1"/>
</dbReference>
<dbReference type="SFLD" id="SFLDF00273">
    <property type="entry name" value="(dimethylallyl)adenosine_tRNA"/>
    <property type="match status" value="1"/>
</dbReference>
<dbReference type="SFLD" id="SFLDG01082">
    <property type="entry name" value="B12-binding_domain_containing"/>
    <property type="match status" value="1"/>
</dbReference>
<dbReference type="SFLD" id="SFLDG01061">
    <property type="entry name" value="methylthiotransferase"/>
    <property type="match status" value="1"/>
</dbReference>
<dbReference type="SMART" id="SM00729">
    <property type="entry name" value="Elp3"/>
    <property type="match status" value="1"/>
</dbReference>
<dbReference type="SUPFAM" id="SSF102114">
    <property type="entry name" value="Radical SAM enzymes"/>
    <property type="match status" value="1"/>
</dbReference>
<dbReference type="PROSITE" id="PS51449">
    <property type="entry name" value="MTTASE_N"/>
    <property type="match status" value="1"/>
</dbReference>
<dbReference type="PROSITE" id="PS01278">
    <property type="entry name" value="MTTASE_RADICAL"/>
    <property type="match status" value="1"/>
</dbReference>
<dbReference type="PROSITE" id="PS51918">
    <property type="entry name" value="RADICAL_SAM"/>
    <property type="match status" value="1"/>
</dbReference>
<dbReference type="PROSITE" id="PS50926">
    <property type="entry name" value="TRAM"/>
    <property type="match status" value="1"/>
</dbReference>
<evidence type="ECO:0000255" key="1">
    <source>
        <dbReference type="HAMAP-Rule" id="MF_01864"/>
    </source>
</evidence>
<evidence type="ECO:0000255" key="2">
    <source>
        <dbReference type="PROSITE-ProRule" id="PRU01266"/>
    </source>
</evidence>
<evidence type="ECO:0000256" key="3">
    <source>
        <dbReference type="SAM" id="MobiDB-lite"/>
    </source>
</evidence>
<proteinExistence type="inferred from homology"/>
<feature type="chain" id="PRO_0000374127" description="tRNA-2-methylthio-N(6)-dimethylallyladenosine synthase">
    <location>
        <begin position="1"/>
        <end position="509"/>
    </location>
</feature>
<feature type="domain" description="MTTase N-terminal" evidence="1">
    <location>
        <begin position="66"/>
        <end position="184"/>
    </location>
</feature>
<feature type="domain" description="Radical SAM core" evidence="2">
    <location>
        <begin position="207"/>
        <end position="437"/>
    </location>
</feature>
<feature type="domain" description="TRAM" evidence="1">
    <location>
        <begin position="440"/>
        <end position="503"/>
    </location>
</feature>
<feature type="region of interest" description="Disordered" evidence="3">
    <location>
        <begin position="1"/>
        <end position="26"/>
    </location>
</feature>
<feature type="compositionally biased region" description="Polar residues" evidence="3">
    <location>
        <begin position="1"/>
        <end position="13"/>
    </location>
</feature>
<feature type="compositionally biased region" description="Basic and acidic residues" evidence="3">
    <location>
        <begin position="16"/>
        <end position="25"/>
    </location>
</feature>
<feature type="binding site" evidence="1">
    <location>
        <position position="75"/>
    </location>
    <ligand>
        <name>[4Fe-4S] cluster</name>
        <dbReference type="ChEBI" id="CHEBI:49883"/>
        <label>1</label>
    </ligand>
</feature>
<feature type="binding site" evidence="1">
    <location>
        <position position="111"/>
    </location>
    <ligand>
        <name>[4Fe-4S] cluster</name>
        <dbReference type="ChEBI" id="CHEBI:49883"/>
        <label>1</label>
    </ligand>
</feature>
<feature type="binding site" evidence="1">
    <location>
        <position position="145"/>
    </location>
    <ligand>
        <name>[4Fe-4S] cluster</name>
        <dbReference type="ChEBI" id="CHEBI:49883"/>
        <label>1</label>
    </ligand>
</feature>
<feature type="binding site" evidence="1">
    <location>
        <position position="221"/>
    </location>
    <ligand>
        <name>[4Fe-4S] cluster</name>
        <dbReference type="ChEBI" id="CHEBI:49883"/>
        <label>2</label>
        <note>4Fe-4S-S-AdoMet</note>
    </ligand>
</feature>
<feature type="binding site" evidence="1">
    <location>
        <position position="225"/>
    </location>
    <ligand>
        <name>[4Fe-4S] cluster</name>
        <dbReference type="ChEBI" id="CHEBI:49883"/>
        <label>2</label>
        <note>4Fe-4S-S-AdoMet</note>
    </ligand>
</feature>
<feature type="binding site" evidence="1">
    <location>
        <position position="228"/>
    </location>
    <ligand>
        <name>[4Fe-4S] cluster</name>
        <dbReference type="ChEBI" id="CHEBI:49883"/>
        <label>2</label>
        <note>4Fe-4S-S-AdoMet</note>
    </ligand>
</feature>
<organism>
    <name type="scientific">Bacillus cereus (strain ATCC 10987 / NRS 248)</name>
    <dbReference type="NCBI Taxonomy" id="222523"/>
    <lineage>
        <taxon>Bacteria</taxon>
        <taxon>Bacillati</taxon>
        <taxon>Bacillota</taxon>
        <taxon>Bacilli</taxon>
        <taxon>Bacillales</taxon>
        <taxon>Bacillaceae</taxon>
        <taxon>Bacillus</taxon>
        <taxon>Bacillus cereus group</taxon>
    </lineage>
</organism>
<sequence length="509" mass="58354">MNEQQRLASQQANSSKKKEEKDYSKYFESVYQPPSLKEAKKRGKEEVKIERDFGLPEEFRNFGTGRKFYIRTYGCQMNEHDTEVMAGIFTALGYEPTFSTEEADVVLLNTCAIRENAENKVFGELGHLKALKRRNPDLLIGVCGCMSQEESVVNKIMQKNQHVDMVFGTHNIHRLPYILKDAMFSKETVVEVWSKEGDVIENLPKVRRGDIKAWVNIMYGCDKFCTYCIVPYTRGKERSRRPEDIIQEIRHLAANGYKEITLLGQNVNAYGKDFEDIEYGLGDLMDELRKVDIARIRFTTSHPRDFDDHLIEVLGKGGNLVEHIHLPVQSGSTEMLKIMARKYSREHYLELVRKIKEAIPNAVLTTDIIVGFPNETDEQFEETMSLYREVGFDTAFTFIYSPREGTPAAKMKDNVPMEVKKERLQRLNALVNKLAIEKNNRYKGQIVEVLVDGESKNNPEVLAGYTRTNKLVNFVAPKSLIGQLVKVKVTDAKTWSLNGELVEEPIEVE</sequence>
<gene>
    <name evidence="1" type="primary">miaB</name>
    <name type="ordered locus">BCE_3806</name>
</gene>
<protein>
    <recommendedName>
        <fullName evidence="1">tRNA-2-methylthio-N(6)-dimethylallyladenosine synthase</fullName>
        <ecNumber evidence="1">2.8.4.3</ecNumber>
    </recommendedName>
    <alternativeName>
        <fullName evidence="1">(Dimethylallyl)adenosine tRNA methylthiotransferase MiaB</fullName>
    </alternativeName>
    <alternativeName>
        <fullName evidence="1">tRNA-i(6)A37 methylthiotransferase</fullName>
    </alternativeName>
</protein>
<accession>Q732V4</accession>
<comment type="function">
    <text evidence="1">Catalyzes the methylthiolation of N6-(dimethylallyl)adenosine (i(6)A), leading to the formation of 2-methylthio-N6-(dimethylallyl)adenosine (ms(2)i(6)A) at position 37 in tRNAs that read codons beginning with uridine.</text>
</comment>
<comment type="catalytic activity">
    <reaction evidence="1">
        <text>N(6)-dimethylallyladenosine(37) in tRNA + (sulfur carrier)-SH + AH2 + 2 S-adenosyl-L-methionine = 2-methylsulfanyl-N(6)-dimethylallyladenosine(37) in tRNA + (sulfur carrier)-H + 5'-deoxyadenosine + L-methionine + A + S-adenosyl-L-homocysteine + 2 H(+)</text>
        <dbReference type="Rhea" id="RHEA:37067"/>
        <dbReference type="Rhea" id="RHEA-COMP:10375"/>
        <dbReference type="Rhea" id="RHEA-COMP:10376"/>
        <dbReference type="Rhea" id="RHEA-COMP:14737"/>
        <dbReference type="Rhea" id="RHEA-COMP:14739"/>
        <dbReference type="ChEBI" id="CHEBI:13193"/>
        <dbReference type="ChEBI" id="CHEBI:15378"/>
        <dbReference type="ChEBI" id="CHEBI:17319"/>
        <dbReference type="ChEBI" id="CHEBI:17499"/>
        <dbReference type="ChEBI" id="CHEBI:29917"/>
        <dbReference type="ChEBI" id="CHEBI:57844"/>
        <dbReference type="ChEBI" id="CHEBI:57856"/>
        <dbReference type="ChEBI" id="CHEBI:59789"/>
        <dbReference type="ChEBI" id="CHEBI:64428"/>
        <dbReference type="ChEBI" id="CHEBI:74415"/>
        <dbReference type="ChEBI" id="CHEBI:74417"/>
        <dbReference type="EC" id="2.8.4.3"/>
    </reaction>
</comment>
<comment type="cofactor">
    <cofactor evidence="1">
        <name>[4Fe-4S] cluster</name>
        <dbReference type="ChEBI" id="CHEBI:49883"/>
    </cofactor>
    <text evidence="1">Binds 2 [4Fe-4S] clusters. One cluster is coordinated with 3 cysteines and an exchangeable S-adenosyl-L-methionine.</text>
</comment>
<comment type="subunit">
    <text evidence="1">Monomer.</text>
</comment>
<comment type="subcellular location">
    <subcellularLocation>
        <location evidence="1">Cytoplasm</location>
    </subcellularLocation>
</comment>
<comment type="similarity">
    <text evidence="1">Belongs to the methylthiotransferase family. MiaB subfamily.</text>
</comment>
<name>MIAB_BACC1</name>
<keyword id="KW-0004">4Fe-4S</keyword>
<keyword id="KW-0963">Cytoplasm</keyword>
<keyword id="KW-0408">Iron</keyword>
<keyword id="KW-0411">Iron-sulfur</keyword>
<keyword id="KW-0479">Metal-binding</keyword>
<keyword id="KW-0949">S-adenosyl-L-methionine</keyword>
<keyword id="KW-0808">Transferase</keyword>
<keyword id="KW-0819">tRNA processing</keyword>